<comment type="similarity">
    <text evidence="1">Belongs to the bacterial ribosomal protein bS16 family.</text>
</comment>
<keyword id="KW-0687">Ribonucleoprotein</keyword>
<keyword id="KW-0689">Ribosomal protein</keyword>
<feature type="chain" id="PRO_0000167172" description="Small ribosomal subunit protein bS16">
    <location>
        <begin position="1"/>
        <end position="119"/>
    </location>
</feature>
<feature type="region of interest" description="Disordered" evidence="2">
    <location>
        <begin position="96"/>
        <end position="119"/>
    </location>
</feature>
<feature type="compositionally biased region" description="Basic residues" evidence="2">
    <location>
        <begin position="96"/>
        <end position="107"/>
    </location>
</feature>
<feature type="compositionally biased region" description="Basic and acidic residues" evidence="2">
    <location>
        <begin position="108"/>
        <end position="119"/>
    </location>
</feature>
<organism>
    <name type="scientific">Chlamydia pneumoniae</name>
    <name type="common">Chlamydophila pneumoniae</name>
    <dbReference type="NCBI Taxonomy" id="83558"/>
    <lineage>
        <taxon>Bacteria</taxon>
        <taxon>Pseudomonadati</taxon>
        <taxon>Chlamydiota</taxon>
        <taxon>Chlamydiia</taxon>
        <taxon>Chlamydiales</taxon>
        <taxon>Chlamydiaceae</taxon>
        <taxon>Chlamydia/Chlamydophila group</taxon>
        <taxon>Chlamydia</taxon>
    </lineage>
</organism>
<proteinExistence type="inferred from homology"/>
<dbReference type="EMBL" id="AE001363">
    <property type="protein sequence ID" value="AAD18269.1"/>
    <property type="molecule type" value="Genomic_DNA"/>
</dbReference>
<dbReference type="EMBL" id="AE002161">
    <property type="protein sequence ID" value="AAF73692.1"/>
    <property type="molecule type" value="Genomic_DNA"/>
</dbReference>
<dbReference type="EMBL" id="BA000008">
    <property type="protein sequence ID" value="BAA98327.1"/>
    <property type="molecule type" value="Genomic_DNA"/>
</dbReference>
<dbReference type="EMBL" id="AE009440">
    <property type="protein sequence ID" value="AAP98050.1"/>
    <property type="molecule type" value="Genomic_DNA"/>
</dbReference>
<dbReference type="PIR" id="B72117">
    <property type="entry name" value="B72117"/>
</dbReference>
<dbReference type="PIR" id="E86505">
    <property type="entry name" value="E86505"/>
</dbReference>
<dbReference type="RefSeq" id="NP_224324.1">
    <property type="nucleotide sequence ID" value="NC_000922.1"/>
</dbReference>
<dbReference type="RefSeq" id="WP_010882766.1">
    <property type="nucleotide sequence ID" value="NZ_LN847257.1"/>
</dbReference>
<dbReference type="SMR" id="Q9Z965"/>
<dbReference type="STRING" id="406984.CPK_ORF00628"/>
<dbReference type="GeneID" id="45050161"/>
<dbReference type="KEGG" id="cpa:CP_0657"/>
<dbReference type="KEGG" id="cpj:rs16"/>
<dbReference type="KEGG" id="cpn:CPn_0116"/>
<dbReference type="KEGG" id="cpt:CpB0117"/>
<dbReference type="PATRIC" id="fig|115713.3.peg.131"/>
<dbReference type="eggNOG" id="COG0228">
    <property type="taxonomic scope" value="Bacteria"/>
</dbReference>
<dbReference type="HOGENOM" id="CLU_100590_3_1_0"/>
<dbReference type="OMA" id="GFYNPIA"/>
<dbReference type="OrthoDB" id="9807878at2"/>
<dbReference type="Proteomes" id="UP000000583">
    <property type="component" value="Chromosome"/>
</dbReference>
<dbReference type="Proteomes" id="UP000000801">
    <property type="component" value="Chromosome"/>
</dbReference>
<dbReference type="GO" id="GO:0005737">
    <property type="term" value="C:cytoplasm"/>
    <property type="evidence" value="ECO:0007669"/>
    <property type="project" value="UniProtKB-ARBA"/>
</dbReference>
<dbReference type="GO" id="GO:0015935">
    <property type="term" value="C:small ribosomal subunit"/>
    <property type="evidence" value="ECO:0007669"/>
    <property type="project" value="TreeGrafter"/>
</dbReference>
<dbReference type="GO" id="GO:0003735">
    <property type="term" value="F:structural constituent of ribosome"/>
    <property type="evidence" value="ECO:0007669"/>
    <property type="project" value="InterPro"/>
</dbReference>
<dbReference type="GO" id="GO:0006412">
    <property type="term" value="P:translation"/>
    <property type="evidence" value="ECO:0007669"/>
    <property type="project" value="UniProtKB-UniRule"/>
</dbReference>
<dbReference type="Gene3D" id="3.30.1320.10">
    <property type="match status" value="1"/>
</dbReference>
<dbReference type="HAMAP" id="MF_00385">
    <property type="entry name" value="Ribosomal_bS16"/>
    <property type="match status" value="1"/>
</dbReference>
<dbReference type="InterPro" id="IPR000307">
    <property type="entry name" value="Ribosomal_bS16"/>
</dbReference>
<dbReference type="InterPro" id="IPR023803">
    <property type="entry name" value="Ribosomal_bS16_dom_sf"/>
</dbReference>
<dbReference type="NCBIfam" id="NF011095">
    <property type="entry name" value="PRK14522.1"/>
    <property type="match status" value="1"/>
</dbReference>
<dbReference type="NCBIfam" id="TIGR00002">
    <property type="entry name" value="S16"/>
    <property type="match status" value="1"/>
</dbReference>
<dbReference type="PANTHER" id="PTHR12919">
    <property type="entry name" value="30S RIBOSOMAL PROTEIN S16"/>
    <property type="match status" value="1"/>
</dbReference>
<dbReference type="PANTHER" id="PTHR12919:SF20">
    <property type="entry name" value="SMALL RIBOSOMAL SUBUNIT PROTEIN BS16M"/>
    <property type="match status" value="1"/>
</dbReference>
<dbReference type="Pfam" id="PF00886">
    <property type="entry name" value="Ribosomal_S16"/>
    <property type="match status" value="1"/>
</dbReference>
<dbReference type="SUPFAM" id="SSF54565">
    <property type="entry name" value="Ribosomal protein S16"/>
    <property type="match status" value="1"/>
</dbReference>
<reference key="1">
    <citation type="journal article" date="1999" name="Nat. Genet.">
        <title>Comparative genomes of Chlamydia pneumoniae and C. trachomatis.</title>
        <authorList>
            <person name="Kalman S."/>
            <person name="Mitchell W.P."/>
            <person name="Marathe R."/>
            <person name="Lammel C.J."/>
            <person name="Fan J."/>
            <person name="Hyman R.W."/>
            <person name="Olinger L."/>
            <person name="Grimwood J."/>
            <person name="Davis R.W."/>
            <person name="Stephens R.S."/>
        </authorList>
    </citation>
    <scope>NUCLEOTIDE SEQUENCE [LARGE SCALE GENOMIC DNA]</scope>
    <source>
        <strain>CWL029</strain>
    </source>
</reference>
<reference key="2">
    <citation type="journal article" date="2000" name="Nucleic Acids Res.">
        <title>Genome sequences of Chlamydia trachomatis MoPn and Chlamydia pneumoniae AR39.</title>
        <authorList>
            <person name="Read T.D."/>
            <person name="Brunham R.C."/>
            <person name="Shen C."/>
            <person name="Gill S.R."/>
            <person name="Heidelberg J.F."/>
            <person name="White O."/>
            <person name="Hickey E.K."/>
            <person name="Peterson J.D."/>
            <person name="Utterback T.R."/>
            <person name="Berry K.J."/>
            <person name="Bass S."/>
            <person name="Linher K.D."/>
            <person name="Weidman J.F."/>
            <person name="Khouri H.M."/>
            <person name="Craven B."/>
            <person name="Bowman C."/>
            <person name="Dodson R.J."/>
            <person name="Gwinn M.L."/>
            <person name="Nelson W.C."/>
            <person name="DeBoy R.T."/>
            <person name="Kolonay J.F."/>
            <person name="McClarty G."/>
            <person name="Salzberg S.L."/>
            <person name="Eisen J.A."/>
            <person name="Fraser C.M."/>
        </authorList>
    </citation>
    <scope>NUCLEOTIDE SEQUENCE [LARGE SCALE GENOMIC DNA]</scope>
    <source>
        <strain>AR39</strain>
    </source>
</reference>
<reference key="3">
    <citation type="journal article" date="2000" name="Nucleic Acids Res.">
        <title>Comparison of whole genome sequences of Chlamydia pneumoniae J138 from Japan and CWL029 from USA.</title>
        <authorList>
            <person name="Shirai M."/>
            <person name="Hirakawa H."/>
            <person name="Kimoto M."/>
            <person name="Tabuchi M."/>
            <person name="Kishi F."/>
            <person name="Ouchi K."/>
            <person name="Shiba T."/>
            <person name="Ishii K."/>
            <person name="Hattori M."/>
            <person name="Kuhara S."/>
            <person name="Nakazawa T."/>
        </authorList>
    </citation>
    <scope>NUCLEOTIDE SEQUENCE [LARGE SCALE GENOMIC DNA]</scope>
    <source>
        <strain>J138</strain>
    </source>
</reference>
<reference key="4">
    <citation type="submission" date="2002-05" db="EMBL/GenBank/DDBJ databases">
        <title>The genome sequence of Chlamydia pneumoniae TW183 and comparison with other Chlamydia strains based on whole genome sequence analysis.</title>
        <authorList>
            <person name="Geng M.M."/>
            <person name="Schuhmacher A."/>
            <person name="Muehldorfer I."/>
            <person name="Bensch K.W."/>
            <person name="Schaefer K.P."/>
            <person name="Schneider S."/>
            <person name="Pohl T."/>
            <person name="Essig A."/>
            <person name="Marre R."/>
            <person name="Melchers K."/>
        </authorList>
    </citation>
    <scope>NUCLEOTIDE SEQUENCE [LARGE SCALE GENOMIC DNA]</scope>
    <source>
        <strain>TW-183</strain>
    </source>
</reference>
<protein>
    <recommendedName>
        <fullName evidence="1">Small ribosomal subunit protein bS16</fullName>
    </recommendedName>
    <alternativeName>
        <fullName evidence="3">30S ribosomal protein S16</fullName>
    </alternativeName>
</protein>
<sequence length="119" mass="13930">MALKIRLRQQGRRNHVVYRLVLADVESPRDGKYIELLGWYDPHSSINYQLKSERIFYWLERGAQLSSKAEALVKQGAPGVYSALLSKQEARKLVVRKKRRAYRQRRSTQREEAAKDATK</sequence>
<accession>Q9Z965</accession>
<accession>Q9JQ58</accession>
<name>RS16_CHLPN</name>
<evidence type="ECO:0000255" key="1">
    <source>
        <dbReference type="HAMAP-Rule" id="MF_00385"/>
    </source>
</evidence>
<evidence type="ECO:0000256" key="2">
    <source>
        <dbReference type="SAM" id="MobiDB-lite"/>
    </source>
</evidence>
<evidence type="ECO:0000305" key="3"/>
<gene>
    <name evidence="1" type="primary">rpsP</name>
    <name type="synonym">rs16</name>
    <name type="ordered locus">CPn_0116</name>
    <name type="ordered locus">CP_0657</name>
    <name type="ordered locus">CpB0117</name>
</gene>